<name>ELOH1_SCHPO</name>
<dbReference type="EC" id="2.3.1.199" evidence="1"/>
<dbReference type="EMBL" id="CU329670">
    <property type="protein sequence ID" value="CAB61470.1"/>
    <property type="molecule type" value="Genomic_DNA"/>
</dbReference>
<dbReference type="PIR" id="T50139">
    <property type="entry name" value="T50139"/>
</dbReference>
<dbReference type="RefSeq" id="NP_593930.1">
    <property type="nucleotide sequence ID" value="NM_001019359.2"/>
</dbReference>
<dbReference type="SMR" id="Q9UTF7"/>
<dbReference type="BioGRID" id="278963">
    <property type="interactions" value="1"/>
</dbReference>
<dbReference type="FunCoup" id="Q9UTF7">
    <property type="interactions" value="363"/>
</dbReference>
<dbReference type="STRING" id="284812.Q9UTF7"/>
<dbReference type="iPTMnet" id="Q9UTF7"/>
<dbReference type="PaxDb" id="4896-SPAC1B2.03c.1"/>
<dbReference type="EnsemblFungi" id="SPAC1B2.03c.1">
    <property type="protein sequence ID" value="SPAC1B2.03c.1:pep"/>
    <property type="gene ID" value="SPAC1B2.03c"/>
</dbReference>
<dbReference type="KEGG" id="spo:2542505"/>
<dbReference type="PomBase" id="SPAC1B2.03c"/>
<dbReference type="VEuPathDB" id="FungiDB:SPAC1B2.03c"/>
<dbReference type="eggNOG" id="KOG3071">
    <property type="taxonomic scope" value="Eukaryota"/>
</dbReference>
<dbReference type="HOGENOM" id="CLU_048483_6_1_1"/>
<dbReference type="InParanoid" id="Q9UTF7"/>
<dbReference type="OMA" id="WTYFTST"/>
<dbReference type="PhylomeDB" id="Q9UTF7"/>
<dbReference type="Reactome" id="R-SPO-2046105">
    <property type="pathway name" value="Linoleic acid (LA) metabolism"/>
</dbReference>
<dbReference type="Reactome" id="R-SPO-2046106">
    <property type="pathway name" value="alpha-linolenic acid (ALA) metabolism"/>
</dbReference>
<dbReference type="Reactome" id="R-SPO-75876">
    <property type="pathway name" value="Synthesis of very long-chain fatty acyl-CoAs"/>
</dbReference>
<dbReference type="PRO" id="PR:Q9UTF7"/>
<dbReference type="Proteomes" id="UP000002485">
    <property type="component" value="Chromosome I"/>
</dbReference>
<dbReference type="GO" id="GO:0005783">
    <property type="term" value="C:endoplasmic reticulum"/>
    <property type="evidence" value="ECO:0007005"/>
    <property type="project" value="PomBase"/>
</dbReference>
<dbReference type="GO" id="GO:0005789">
    <property type="term" value="C:endoplasmic reticulum membrane"/>
    <property type="evidence" value="ECO:0000269"/>
    <property type="project" value="PomBase"/>
</dbReference>
<dbReference type="GO" id="GO:0031965">
    <property type="term" value="C:nuclear membrane"/>
    <property type="evidence" value="ECO:0000269"/>
    <property type="project" value="PomBase"/>
</dbReference>
<dbReference type="GO" id="GO:0009922">
    <property type="term" value="F:fatty acid elongase activity"/>
    <property type="evidence" value="ECO:0000315"/>
    <property type="project" value="PomBase"/>
</dbReference>
<dbReference type="GO" id="GO:0034625">
    <property type="term" value="P:fatty acid elongation, monounsaturated fatty acid"/>
    <property type="evidence" value="ECO:0000318"/>
    <property type="project" value="GO_Central"/>
</dbReference>
<dbReference type="GO" id="GO:0034626">
    <property type="term" value="P:fatty acid elongation, polyunsaturated fatty acid"/>
    <property type="evidence" value="ECO:0000318"/>
    <property type="project" value="GO_Central"/>
</dbReference>
<dbReference type="GO" id="GO:0019367">
    <property type="term" value="P:fatty acid elongation, saturated fatty acid"/>
    <property type="evidence" value="ECO:0000318"/>
    <property type="project" value="GO_Central"/>
</dbReference>
<dbReference type="GO" id="GO:0071763">
    <property type="term" value="P:nuclear membrane organization"/>
    <property type="evidence" value="ECO:0000315"/>
    <property type="project" value="PomBase"/>
</dbReference>
<dbReference type="GO" id="GO:0030148">
    <property type="term" value="P:sphingolipid biosynthetic process"/>
    <property type="evidence" value="ECO:0000315"/>
    <property type="project" value="PomBase"/>
</dbReference>
<dbReference type="GO" id="GO:0042761">
    <property type="term" value="P:very long-chain fatty acid biosynthetic process"/>
    <property type="evidence" value="ECO:0000318"/>
    <property type="project" value="GO_Central"/>
</dbReference>
<dbReference type="InterPro" id="IPR002076">
    <property type="entry name" value="ELO_fam"/>
</dbReference>
<dbReference type="PANTHER" id="PTHR11157:SF134">
    <property type="entry name" value="ELONGATION OF FATTY ACIDS PROTEIN 1-RELATED"/>
    <property type="match status" value="1"/>
</dbReference>
<dbReference type="PANTHER" id="PTHR11157">
    <property type="entry name" value="FATTY ACID ACYL TRANSFERASE-RELATED"/>
    <property type="match status" value="1"/>
</dbReference>
<dbReference type="Pfam" id="PF01151">
    <property type="entry name" value="ELO"/>
    <property type="match status" value="1"/>
</dbReference>
<feature type="chain" id="PRO_0000316229" description="Putative fatty acid elongase 1">
    <location>
        <begin position="1"/>
        <end position="334"/>
    </location>
</feature>
<feature type="topological domain" description="Lumenal" evidence="1">
    <location>
        <begin position="1"/>
        <end position="51"/>
    </location>
</feature>
<feature type="transmembrane region" description="Helical; Name=1" evidence="2">
    <location>
        <begin position="52"/>
        <end position="72"/>
    </location>
</feature>
<feature type="topological domain" description="Cytoplasmic" evidence="1">
    <location>
        <begin position="73"/>
        <end position="86"/>
    </location>
</feature>
<feature type="transmembrane region" description="Helical; Name=2" evidence="2">
    <location>
        <begin position="87"/>
        <end position="107"/>
    </location>
</feature>
<feature type="topological domain" description="Lumenal" evidence="1">
    <location>
        <begin position="108"/>
        <end position="135"/>
    </location>
</feature>
<feature type="transmembrane region" description="Helical; Name=3" evidence="2">
    <location>
        <begin position="136"/>
        <end position="156"/>
    </location>
</feature>
<feature type="topological domain" description="Cytoplasmic" evidence="1">
    <location>
        <begin position="157"/>
        <end position="160"/>
    </location>
</feature>
<feature type="transmembrane region" description="Helical; Name=4" evidence="2">
    <location>
        <begin position="161"/>
        <end position="181"/>
    </location>
</feature>
<feature type="topological domain" description="Lumenal" evidence="1">
    <location>
        <begin position="182"/>
        <end position="187"/>
    </location>
</feature>
<feature type="transmembrane region" description="Helical; Name=5" evidence="2">
    <location>
        <begin position="188"/>
        <end position="208"/>
    </location>
</feature>
<feature type="topological domain" description="Cytoplasmic" evidence="1">
    <location>
        <begin position="209"/>
        <end position="224"/>
    </location>
</feature>
<feature type="transmembrane region" description="Helical; Name=6" evidence="2">
    <location>
        <begin position="225"/>
        <end position="245"/>
    </location>
</feature>
<feature type="topological domain" description="Lumenal" evidence="1">
    <location>
        <begin position="246"/>
        <end position="260"/>
    </location>
</feature>
<feature type="transmembrane region" description="Helical; Name=7" evidence="2">
    <location>
        <begin position="261"/>
        <end position="281"/>
    </location>
</feature>
<feature type="topological domain" description="Cytoplasmic" evidence="1">
    <location>
        <begin position="282"/>
        <end position="334"/>
    </location>
</feature>
<feature type="modified residue" description="Phosphoserine" evidence="4">
    <location>
        <position position="325"/>
    </location>
</feature>
<gene>
    <name evidence="6" type="ORF">SPAC1B2.03c</name>
</gene>
<evidence type="ECO:0000250" key="1">
    <source>
        <dbReference type="UniProtKB" id="P40319"/>
    </source>
</evidence>
<evidence type="ECO:0000255" key="2"/>
<evidence type="ECO:0000269" key="3">
    <source>
    </source>
</evidence>
<evidence type="ECO:0000269" key="4">
    <source>
    </source>
</evidence>
<evidence type="ECO:0000305" key="5"/>
<evidence type="ECO:0000312" key="6">
    <source>
        <dbReference type="PomBase" id="SPAC1B2.03c"/>
    </source>
</evidence>
<proteinExistence type="evidence at protein level"/>
<comment type="function">
    <text evidence="1">May be involved in the synthesis of very long chain fatty acids.</text>
</comment>
<comment type="catalytic activity">
    <reaction evidence="1">
        <text>a very-long-chain acyl-CoA + malonyl-CoA + H(+) = a very-long-chain 3-oxoacyl-CoA + CO2 + CoA</text>
        <dbReference type="Rhea" id="RHEA:32727"/>
        <dbReference type="ChEBI" id="CHEBI:15378"/>
        <dbReference type="ChEBI" id="CHEBI:16526"/>
        <dbReference type="ChEBI" id="CHEBI:57287"/>
        <dbReference type="ChEBI" id="CHEBI:57384"/>
        <dbReference type="ChEBI" id="CHEBI:90725"/>
        <dbReference type="ChEBI" id="CHEBI:90736"/>
        <dbReference type="EC" id="2.3.1.199"/>
    </reaction>
</comment>
<comment type="subcellular location">
    <subcellularLocation>
        <location evidence="3">Endoplasmic reticulum membrane</location>
        <topology evidence="2">Multi-pass membrane protein</topology>
    </subcellularLocation>
</comment>
<comment type="similarity">
    <text evidence="5">Belongs to the ELO family.</text>
</comment>
<protein>
    <recommendedName>
        <fullName evidence="5">Putative fatty acid elongase 1</fullName>
        <ecNumber evidence="1">2.3.1.199</ecNumber>
    </recommendedName>
    <alternativeName>
        <fullName evidence="1">3-keto acyl-CoA synthase SPAC1B2.03c</fullName>
    </alternativeName>
    <alternativeName>
        <fullName evidence="1">Putative elongation of fatty acids protein 1</fullName>
    </alternativeName>
    <alternativeName>
        <fullName evidence="1">Very-long-chain 3-oxoacyl-CoA synthase 1</fullName>
    </alternativeName>
</protein>
<reference key="1">
    <citation type="journal article" date="2002" name="Nature">
        <title>The genome sequence of Schizosaccharomyces pombe.</title>
        <authorList>
            <person name="Wood V."/>
            <person name="Gwilliam R."/>
            <person name="Rajandream M.A."/>
            <person name="Lyne M.H."/>
            <person name="Lyne R."/>
            <person name="Stewart A."/>
            <person name="Sgouros J.G."/>
            <person name="Peat N."/>
            <person name="Hayles J."/>
            <person name="Baker S.G."/>
            <person name="Basham D."/>
            <person name="Bowman S."/>
            <person name="Brooks K."/>
            <person name="Brown D."/>
            <person name="Brown S."/>
            <person name="Chillingworth T."/>
            <person name="Churcher C.M."/>
            <person name="Collins M."/>
            <person name="Connor R."/>
            <person name="Cronin A."/>
            <person name="Davis P."/>
            <person name="Feltwell T."/>
            <person name="Fraser A."/>
            <person name="Gentles S."/>
            <person name="Goble A."/>
            <person name="Hamlin N."/>
            <person name="Harris D.E."/>
            <person name="Hidalgo J."/>
            <person name="Hodgson G."/>
            <person name="Holroyd S."/>
            <person name="Hornsby T."/>
            <person name="Howarth S."/>
            <person name="Huckle E.J."/>
            <person name="Hunt S."/>
            <person name="Jagels K."/>
            <person name="James K.D."/>
            <person name="Jones L."/>
            <person name="Jones M."/>
            <person name="Leather S."/>
            <person name="McDonald S."/>
            <person name="McLean J."/>
            <person name="Mooney P."/>
            <person name="Moule S."/>
            <person name="Mungall K.L."/>
            <person name="Murphy L.D."/>
            <person name="Niblett D."/>
            <person name="Odell C."/>
            <person name="Oliver K."/>
            <person name="O'Neil S."/>
            <person name="Pearson D."/>
            <person name="Quail M.A."/>
            <person name="Rabbinowitsch E."/>
            <person name="Rutherford K.M."/>
            <person name="Rutter S."/>
            <person name="Saunders D."/>
            <person name="Seeger K."/>
            <person name="Sharp S."/>
            <person name="Skelton J."/>
            <person name="Simmonds M.N."/>
            <person name="Squares R."/>
            <person name="Squares S."/>
            <person name="Stevens K."/>
            <person name="Taylor K."/>
            <person name="Taylor R.G."/>
            <person name="Tivey A."/>
            <person name="Walsh S.V."/>
            <person name="Warren T."/>
            <person name="Whitehead S."/>
            <person name="Woodward J.R."/>
            <person name="Volckaert G."/>
            <person name="Aert R."/>
            <person name="Robben J."/>
            <person name="Grymonprez B."/>
            <person name="Weltjens I."/>
            <person name="Vanstreels E."/>
            <person name="Rieger M."/>
            <person name="Schaefer M."/>
            <person name="Mueller-Auer S."/>
            <person name="Gabel C."/>
            <person name="Fuchs M."/>
            <person name="Duesterhoeft A."/>
            <person name="Fritzc C."/>
            <person name="Holzer E."/>
            <person name="Moestl D."/>
            <person name="Hilbert H."/>
            <person name="Borzym K."/>
            <person name="Langer I."/>
            <person name="Beck A."/>
            <person name="Lehrach H."/>
            <person name="Reinhardt R."/>
            <person name="Pohl T.M."/>
            <person name="Eger P."/>
            <person name="Zimmermann W."/>
            <person name="Wedler H."/>
            <person name="Wambutt R."/>
            <person name="Purnelle B."/>
            <person name="Goffeau A."/>
            <person name="Cadieu E."/>
            <person name="Dreano S."/>
            <person name="Gloux S."/>
            <person name="Lelaure V."/>
            <person name="Mottier S."/>
            <person name="Galibert F."/>
            <person name="Aves S.J."/>
            <person name="Xiang Z."/>
            <person name="Hunt C."/>
            <person name="Moore K."/>
            <person name="Hurst S.M."/>
            <person name="Lucas M."/>
            <person name="Rochet M."/>
            <person name="Gaillardin C."/>
            <person name="Tallada V.A."/>
            <person name="Garzon A."/>
            <person name="Thode G."/>
            <person name="Daga R.R."/>
            <person name="Cruzado L."/>
            <person name="Jimenez J."/>
            <person name="Sanchez M."/>
            <person name="del Rey F."/>
            <person name="Benito J."/>
            <person name="Dominguez A."/>
            <person name="Revuelta J.L."/>
            <person name="Moreno S."/>
            <person name="Armstrong J."/>
            <person name="Forsburg S.L."/>
            <person name="Cerutti L."/>
            <person name="Lowe T."/>
            <person name="McCombie W.R."/>
            <person name="Paulsen I."/>
            <person name="Potashkin J."/>
            <person name="Shpakovski G.V."/>
            <person name="Ussery D."/>
            <person name="Barrell B.G."/>
            <person name="Nurse P."/>
        </authorList>
    </citation>
    <scope>NUCLEOTIDE SEQUENCE [LARGE SCALE GENOMIC DNA]</scope>
    <source>
        <strain>972 / ATCC 24843</strain>
    </source>
</reference>
<reference key="2">
    <citation type="journal article" date="2006" name="Nat. Biotechnol.">
        <title>ORFeome cloning and global analysis of protein localization in the fission yeast Schizosaccharomyces pombe.</title>
        <authorList>
            <person name="Matsuyama A."/>
            <person name="Arai R."/>
            <person name="Yashiroda Y."/>
            <person name="Shirai A."/>
            <person name="Kamata A."/>
            <person name="Sekido S."/>
            <person name="Kobayashi Y."/>
            <person name="Hashimoto A."/>
            <person name="Hamamoto M."/>
            <person name="Hiraoka Y."/>
            <person name="Horinouchi S."/>
            <person name="Yoshida M."/>
        </authorList>
    </citation>
    <scope>SUBCELLULAR LOCATION [LARGE SCALE ANALYSIS]</scope>
</reference>
<reference key="3">
    <citation type="journal article" date="2008" name="J. Proteome Res.">
        <title>Phosphoproteome analysis of fission yeast.</title>
        <authorList>
            <person name="Wilson-Grady J.T."/>
            <person name="Villen J."/>
            <person name="Gygi S.P."/>
        </authorList>
    </citation>
    <scope>PHOSPHORYLATION [LARGE SCALE ANALYSIS] AT SER-325</scope>
    <scope>IDENTIFICATION BY MASS SPECTROMETRY</scope>
</reference>
<organism>
    <name type="scientific">Schizosaccharomyces pombe (strain 972 / ATCC 24843)</name>
    <name type="common">Fission yeast</name>
    <dbReference type="NCBI Taxonomy" id="284812"/>
    <lineage>
        <taxon>Eukaryota</taxon>
        <taxon>Fungi</taxon>
        <taxon>Dikarya</taxon>
        <taxon>Ascomycota</taxon>
        <taxon>Taphrinomycotina</taxon>
        <taxon>Schizosaccharomycetes</taxon>
        <taxon>Schizosaccharomycetales</taxon>
        <taxon>Schizosaccharomycetaceae</taxon>
        <taxon>Schizosaccharomyces</taxon>
    </lineage>
</organism>
<accession>Q9UTF7</accession>
<keyword id="KW-0256">Endoplasmic reticulum</keyword>
<keyword id="KW-0275">Fatty acid biosynthesis</keyword>
<keyword id="KW-0276">Fatty acid metabolism</keyword>
<keyword id="KW-0444">Lipid biosynthesis</keyword>
<keyword id="KW-0443">Lipid metabolism</keyword>
<keyword id="KW-0472">Membrane</keyword>
<keyword id="KW-0597">Phosphoprotein</keyword>
<keyword id="KW-1185">Reference proteome</keyword>
<keyword id="KW-0808">Transferase</keyword>
<keyword id="KW-0812">Transmembrane</keyword>
<keyword id="KW-1133">Transmembrane helix</keyword>
<sequence length="334" mass="38337">MDLTGAHMLKIHRPSIDHPFGVDLWHLFEQLSIKTIGWNPSEFEYIPGKTPMSQWSSVIVSITAYYVIILSGRAIMTNRKPLKQRRLFQLHNFILTIISGALLALLVEEVFRNYMRNGLFYCVCDSRHFTQRLVTLYYLNYLTKYLELMDTVFLFLKKKPLAFLHCYHHGITALLCFTQLLGRTSVQWGVIGLNLYVHVIMYSYYFLAACGRRVWWKQWVTRVQIIQFVLDLILCYFGTYSHIAFRYFPWLPHVGDCSGSLFAAFFGCGVLSSYLFLFIGFYINTYIKRGAKKNQRKAAGKADNTSVAAAAGSEALAATTATNASPFSARSRKL</sequence>